<reference key="1">
    <citation type="journal article" date="2002" name="Proc. Natl. Acad. Sci. U.S.A.">
        <title>Emergence of multiple genotypes of H5N1 avian influenza viruses in Hong Kong SAR.</title>
        <authorList>
            <person name="Guan Y."/>
            <person name="Peiris J.S.M."/>
            <person name="Lipatov A.S."/>
            <person name="Ellis T.M."/>
            <person name="Dyrting K.C."/>
            <person name="Krauss S."/>
            <person name="Zhang L.J."/>
            <person name="Webster R.G."/>
            <person name="Shortridge K.F."/>
        </authorList>
    </citation>
    <scope>NUCLEOTIDE SEQUENCE [GENOMIC RNA]</scope>
</reference>
<keyword id="KW-0025">Alternative splicing</keyword>
<keyword id="KW-1262">Eukaryotic host gene expression shutoff by virus</keyword>
<keyword id="KW-1035">Host cytoplasm</keyword>
<keyword id="KW-1190">Host gene expression shutoff by virus</keyword>
<keyword id="KW-1192">Host mRNA suppression by virus</keyword>
<keyword id="KW-1048">Host nucleus</keyword>
<keyword id="KW-0945">Host-virus interaction</keyword>
<keyword id="KW-1090">Inhibition of host innate immune response by virus</keyword>
<keyword id="KW-1114">Inhibition of host interferon signaling pathway by virus</keyword>
<keyword id="KW-1102">Inhibition of host PKR by virus</keyword>
<keyword id="KW-1103">Inhibition of host pre-mRNA processing by virus</keyword>
<keyword id="KW-1088">Inhibition of host RIG-I by virus</keyword>
<keyword id="KW-1113">Inhibition of host RLR pathway by virus</keyword>
<keyword id="KW-0922">Interferon antiviral system evasion</keyword>
<keyword id="KW-0694">RNA-binding</keyword>
<keyword id="KW-0832">Ubl conjugation</keyword>
<keyword id="KW-0899">Viral immunoevasion</keyword>
<gene>
    <name evidence="1" type="primary">NS</name>
</gene>
<protein>
    <recommendedName>
        <fullName evidence="1">Non-structural protein 1</fullName>
        <shortName evidence="1">NS1</shortName>
    </recommendedName>
    <alternativeName>
        <fullName evidence="1">NS1A</fullName>
    </alternativeName>
</protein>
<name>NS1_I01A0</name>
<sequence length="225" mass="25539">MDSNTVSSFQVDCFLWHVRKRFADQELGDAPFLDRLRRDQKSLRGRGNTLGLDIETATRAGKQIVERILEEESDEALKMPASRYLTDMTLEEMSRGWFMLMPKQKVAGSLCIKMDQAIMDKNIILKANFSVIFDRLETLILLRAFTEEGAIVGEISPLPSLPGHTDEDVKNAIGVLIGGLEWNDNTVRVSETLQRFAWRSSDEDGRPPLPPNQKRKMARTIESEV</sequence>
<proteinExistence type="inferred from homology"/>
<organism>
    <name type="scientific">Influenza A virus (strain A/Silky Chicken/Hong Kong/SF189/2001 H5N1 genotype A)</name>
    <dbReference type="NCBI Taxonomy" id="196430"/>
    <lineage>
        <taxon>Viruses</taxon>
        <taxon>Riboviria</taxon>
        <taxon>Orthornavirae</taxon>
        <taxon>Negarnaviricota</taxon>
        <taxon>Polyploviricotina</taxon>
        <taxon>Insthoviricetes</taxon>
        <taxon>Articulavirales</taxon>
        <taxon>Orthomyxoviridae</taxon>
        <taxon>Alphainfluenzavirus</taxon>
        <taxon>Alphainfluenzavirus influenzae</taxon>
        <taxon>Influenza A virus</taxon>
    </lineage>
</organism>
<evidence type="ECO:0000255" key="1">
    <source>
        <dbReference type="HAMAP-Rule" id="MF_04066"/>
    </source>
</evidence>
<evidence type="ECO:0000256" key="2">
    <source>
        <dbReference type="SAM" id="MobiDB-lite"/>
    </source>
</evidence>
<feature type="chain" id="PRO_0000311743" description="Non-structural protein 1">
    <location>
        <begin position="1"/>
        <end position="225"/>
    </location>
</feature>
<feature type="region of interest" description="RNA-binding and homodimerization" evidence="1">
    <location>
        <begin position="1"/>
        <end position="73"/>
    </location>
</feature>
<feature type="region of interest" description="CPSF4-binding" evidence="1">
    <location>
        <begin position="175"/>
        <end position="210"/>
    </location>
</feature>
<feature type="region of interest" description="Disordered" evidence="2">
    <location>
        <begin position="200"/>
        <end position="225"/>
    </location>
</feature>
<feature type="region of interest" description="PABPN1-binding" evidence="1">
    <location>
        <begin position="218"/>
        <end position="225"/>
    </location>
</feature>
<feature type="short sequence motif" description="Nuclear localization signal" evidence="1">
    <location>
        <begin position="34"/>
        <end position="38"/>
    </location>
</feature>
<feature type="short sequence motif" description="Nuclear export signal" evidence="1">
    <location>
        <begin position="132"/>
        <end position="141"/>
    </location>
</feature>
<dbReference type="EMBL" id="AF509071">
    <property type="protein sequence ID" value="AAO52914.1"/>
    <property type="molecule type" value="Genomic_DNA"/>
</dbReference>
<dbReference type="SMR" id="Q809X6"/>
<dbReference type="GO" id="GO:0030430">
    <property type="term" value="C:host cell cytoplasm"/>
    <property type="evidence" value="ECO:0007669"/>
    <property type="project" value="UniProtKB-SubCell"/>
</dbReference>
<dbReference type="GO" id="GO:0042025">
    <property type="term" value="C:host cell nucleus"/>
    <property type="evidence" value="ECO:0007669"/>
    <property type="project" value="UniProtKB-SubCell"/>
</dbReference>
<dbReference type="GO" id="GO:0030291">
    <property type="term" value="F:protein serine/threonine kinase inhibitor activity"/>
    <property type="evidence" value="ECO:0007669"/>
    <property type="project" value="UniProtKB-KW"/>
</dbReference>
<dbReference type="GO" id="GO:0003723">
    <property type="term" value="F:RNA binding"/>
    <property type="evidence" value="ECO:0007669"/>
    <property type="project" value="UniProtKB-KW"/>
</dbReference>
<dbReference type="GO" id="GO:0039540">
    <property type="term" value="P:symbiont-mediated suppression of host cytoplasmic pattern recognition receptor signaling pathway via inhibition of RIG-I activity"/>
    <property type="evidence" value="ECO:0007669"/>
    <property type="project" value="UniProtKB-KW"/>
</dbReference>
<dbReference type="GO" id="GO:0039657">
    <property type="term" value="P:symbiont-mediated suppression of host gene expression"/>
    <property type="evidence" value="ECO:0007669"/>
    <property type="project" value="UniProtKB-KW"/>
</dbReference>
<dbReference type="GO" id="GO:0039524">
    <property type="term" value="P:symbiont-mediated suppression of host mRNA processing"/>
    <property type="evidence" value="ECO:0007669"/>
    <property type="project" value="UniProtKB-KW"/>
</dbReference>
<dbReference type="GO" id="GO:0039580">
    <property type="term" value="P:symbiont-mediated suppression of host PKR/eIFalpha signaling"/>
    <property type="evidence" value="ECO:0007669"/>
    <property type="project" value="UniProtKB-KW"/>
</dbReference>
<dbReference type="GO" id="GO:0039502">
    <property type="term" value="P:symbiont-mediated suppression of host type I interferon-mediated signaling pathway"/>
    <property type="evidence" value="ECO:0007669"/>
    <property type="project" value="UniProtKB-KW"/>
</dbReference>
<dbReference type="FunFam" id="1.10.287.10:FF:000001">
    <property type="entry name" value="Non-structural protein 1"/>
    <property type="match status" value="1"/>
</dbReference>
<dbReference type="FunFam" id="3.30.420.330:FF:000001">
    <property type="entry name" value="Non-structural protein 1"/>
    <property type="match status" value="1"/>
</dbReference>
<dbReference type="Gene3D" id="3.30.420.330">
    <property type="entry name" value="Influenza virus non-structural protein, effector domain"/>
    <property type="match status" value="1"/>
</dbReference>
<dbReference type="Gene3D" id="1.10.287.10">
    <property type="entry name" value="S15/NS1, RNA-binding"/>
    <property type="match status" value="1"/>
</dbReference>
<dbReference type="HAMAP" id="MF_04066">
    <property type="entry name" value="INFV_NS1"/>
    <property type="match status" value="1"/>
</dbReference>
<dbReference type="InterPro" id="IPR004208">
    <property type="entry name" value="NS1"/>
</dbReference>
<dbReference type="InterPro" id="IPR000256">
    <property type="entry name" value="NS1A"/>
</dbReference>
<dbReference type="InterPro" id="IPR038064">
    <property type="entry name" value="NS1A_effect_dom-like_sf"/>
</dbReference>
<dbReference type="InterPro" id="IPR009068">
    <property type="entry name" value="uS15_NS1_RNA-bd_sf"/>
</dbReference>
<dbReference type="Pfam" id="PF00600">
    <property type="entry name" value="Flu_NS1"/>
    <property type="match status" value="1"/>
</dbReference>
<dbReference type="SUPFAM" id="SSF143021">
    <property type="entry name" value="Ns1 effector domain-like"/>
    <property type="match status" value="1"/>
</dbReference>
<dbReference type="SUPFAM" id="SSF47060">
    <property type="entry name" value="S15/NS1 RNA-binding domain"/>
    <property type="match status" value="1"/>
</dbReference>
<organismHost>
    <name type="scientific">Aves</name>
    <dbReference type="NCBI Taxonomy" id="8782"/>
</organismHost>
<organismHost>
    <name type="scientific">Felis catus</name>
    <name type="common">Cat</name>
    <name type="synonym">Felis silvestris catus</name>
    <dbReference type="NCBI Taxonomy" id="9685"/>
</organismHost>
<organismHost>
    <name type="scientific">Homo sapiens</name>
    <name type="common">Human</name>
    <dbReference type="NCBI Taxonomy" id="9606"/>
</organismHost>
<organismHost>
    <name type="scientific">Panthera pardus</name>
    <name type="common">Leopard</name>
    <name type="synonym">Felis pardus</name>
    <dbReference type="NCBI Taxonomy" id="9691"/>
</organismHost>
<organismHost>
    <name type="scientific">Panthera tigris</name>
    <name type="common">Tiger</name>
    <dbReference type="NCBI Taxonomy" id="9694"/>
</organismHost>
<organismHost>
    <name type="scientific">Sus scrofa</name>
    <name type="common">Pig</name>
    <dbReference type="NCBI Taxonomy" id="9823"/>
</organismHost>
<accession>Q809X6</accession>
<comment type="function">
    <text evidence="1">Inhibits post-transcriptional processing of cellular pre-mRNA, by binding and inhibiting two cellular proteins that are required for the 3'-end processing of cellular pre-mRNAs: the 30 kDa cleavage and polyadenylation specificity factor/CPSF4 and the poly(A)-binding protein 2/PABPN1. In turn, unprocessed 3' end pre-mRNAs accumulate in the host nucleus and are no longer exported to the cytoplasm. Cellular protein synthesis is thereby shut off very early after virus infection. Viral protein synthesis is not affected by the inhibition of the cellular 3' end processing machinery because the poly(A) tails of viral mRNAs are produced by the viral polymerase through a stuttering mechanism. Prevents the establishment of the cellular antiviral state by inhibiting TRIM25-mediated RIGI ubiquitination, which normally triggers the antiviral transduction signal that leads to the activation of type I IFN genes by transcription factors IRF3 and IRF7. Also binds poly(A) and U6 snRNA. Inhibits the integrated stress response (ISR) in the infected cell by blocking dsRNA binding by EIF2AK2/PKR and further phosphorylation of EIF2S1/EIF-2ALPHA. Stress granule formation is thus inhibited, which allows protein synthesis and viral replication.</text>
</comment>
<comment type="subunit">
    <text evidence="1">Homodimer. Interacts with host TRIM25 (via coiled coil); this interaction specifically inhibits TRIM25 multimerization and TRIM25-mediated RIGI CARD ubiquitination. Interacts with human EIF2AK2/PKR, CPSF4, IVNS1ABP and PABPN1.</text>
</comment>
<comment type="subcellular location">
    <subcellularLocation>
        <location evidence="1">Host nucleus</location>
    </subcellularLocation>
    <subcellularLocation>
        <location evidence="1">Host cytoplasm</location>
    </subcellularLocation>
    <text evidence="1">In uninfected, transfected cells, NS1 is localized in the nucleus. Only in virus infected cells, the nuclear export signal is unveiled, presumably by a viral protein, and a fraction of NS1 is exported in the cytoplasm.</text>
</comment>
<comment type="alternative products">
    <event type="alternative splicing"/>
    <isoform>
        <id>Q809X6-1</id>
        <name>NS1</name>
        <sequence type="displayed"/>
    </isoform>
    <isoform>
        <id>P0C5T8-1</id>
        <name>NEP</name>
        <name>NS2</name>
        <sequence type="external"/>
    </isoform>
</comment>
<comment type="domain">
    <text evidence="1">The dsRNA-binding region is required for suppression of RNA silencing.</text>
</comment>
<comment type="PTM">
    <text evidence="1">Upon interferon induction, ISGylated via host HERC5; this results in the impairment of NS1 interaction with RNA targets due to its inability to form homodimers and to interact with host EIF2AK2/PKR.</text>
</comment>
<comment type="similarity">
    <text evidence="1">Belongs to the influenza A viruses NS1 family.</text>
</comment>